<evidence type="ECO:0000250" key="1">
    <source>
        <dbReference type="UniProtKB" id="P83923"/>
    </source>
</evidence>
<evidence type="ECO:0000250" key="2">
    <source>
        <dbReference type="UniProtKB" id="P84375"/>
    </source>
</evidence>
<evidence type="ECO:0000255" key="3"/>
<evidence type="ECO:0000269" key="4">
    <source>
    </source>
</evidence>
<evidence type="ECO:0000303" key="5">
    <source>
    </source>
</evidence>
<evidence type="ECO:0000305" key="6"/>
<protein>
    <recommendedName>
        <fullName evidence="5">Periviscerokinin-2</fullName>
    </recommendedName>
</protein>
<accession>P86666</accession>
<dbReference type="GO" id="GO:0005576">
    <property type="term" value="C:extracellular region"/>
    <property type="evidence" value="ECO:0007669"/>
    <property type="project" value="UniProtKB-SubCell"/>
</dbReference>
<dbReference type="GO" id="GO:0007218">
    <property type="term" value="P:neuropeptide signaling pathway"/>
    <property type="evidence" value="ECO:0007669"/>
    <property type="project" value="UniProtKB-KW"/>
</dbReference>
<dbReference type="InterPro" id="IPR013231">
    <property type="entry name" value="Periviscerokinin"/>
</dbReference>
<dbReference type="Pfam" id="PF08259">
    <property type="entry name" value="Periviscerokin"/>
    <property type="match status" value="1"/>
</dbReference>
<organism>
    <name type="scientific">Phyllocrania paradoxa</name>
    <name type="common">Ghost praying mantis</name>
    <dbReference type="NCBI Taxonomy" id="267208"/>
    <lineage>
        <taxon>Eukaryota</taxon>
        <taxon>Metazoa</taxon>
        <taxon>Ecdysozoa</taxon>
        <taxon>Arthropoda</taxon>
        <taxon>Hexapoda</taxon>
        <taxon>Insecta</taxon>
        <taxon>Pterygota</taxon>
        <taxon>Neoptera</taxon>
        <taxon>Polyneoptera</taxon>
        <taxon>Dictyoptera</taxon>
        <taxon>Mantodea</taxon>
        <taxon>Eumantodea</taxon>
        <taxon>Hymenopoidea</taxon>
        <taxon>Hymenopodidae</taxon>
        <taxon>Phyllocraniinae</taxon>
        <taxon>Phyllocrania</taxon>
    </lineage>
</organism>
<comment type="function">
    <text evidence="1">Mediates visceral muscle contractile activity (myotropic activity).</text>
</comment>
<comment type="subcellular location">
    <subcellularLocation>
        <location evidence="2">Secreted</location>
    </subcellularLocation>
</comment>
<comment type="mass spectrometry" mass="1100.7" method="MALDI" evidence="4"/>
<comment type="similarity">
    <text evidence="3">Belongs to the periviscerokinin family.</text>
</comment>
<reference evidence="6" key="1">
    <citation type="journal article" date="2010" name="Peptides">
        <title>CAPA-peptides of praying mantids (Mantodea).</title>
        <authorList>
            <person name="Koehler R."/>
            <person name="Predel R."/>
        </authorList>
    </citation>
    <scope>PROTEIN SEQUENCE</scope>
    <scope>MASS SPECTROMETRY</scope>
    <scope>AMIDATION AT LEU-11</scope>
    <source>
        <tissue evidence="4">Abdominal perisympathetic organs</tissue>
    </source>
</reference>
<proteinExistence type="evidence at protein level"/>
<sequence length="11" mass="1101">GASGLIAFPRL</sequence>
<name>PVK2_PHYPD</name>
<feature type="peptide" id="PRO_0000395593" description="Periviscerokinin-2" evidence="4">
    <location>
        <begin position="1"/>
        <end position="11"/>
    </location>
</feature>
<feature type="modified residue" description="Leucine amide" evidence="4">
    <location>
        <position position="11"/>
    </location>
</feature>
<feature type="unsure residue" description="L or I" evidence="4">
    <location>
        <position position="5"/>
    </location>
</feature>
<feature type="unsure residue" description="I or L" evidence="4">
    <location>
        <position position="6"/>
    </location>
</feature>
<feature type="unsure residue" description="L or I" evidence="4">
    <location>
        <position position="11"/>
    </location>
</feature>
<keyword id="KW-0027">Amidation</keyword>
<keyword id="KW-0903">Direct protein sequencing</keyword>
<keyword id="KW-0527">Neuropeptide</keyword>
<keyword id="KW-0964">Secreted</keyword>